<reference key="1">
    <citation type="journal article" date="2000" name="Science">
        <title>Complete genome sequence of Neisseria meningitidis serogroup B strain MC58.</title>
        <authorList>
            <person name="Tettelin H."/>
            <person name="Saunders N.J."/>
            <person name="Heidelberg J.F."/>
            <person name="Jeffries A.C."/>
            <person name="Nelson K.E."/>
            <person name="Eisen J.A."/>
            <person name="Ketchum K.A."/>
            <person name="Hood D.W."/>
            <person name="Peden J.F."/>
            <person name="Dodson R.J."/>
            <person name="Nelson W.C."/>
            <person name="Gwinn M.L."/>
            <person name="DeBoy R.T."/>
            <person name="Peterson J.D."/>
            <person name="Hickey E.K."/>
            <person name="Haft D.H."/>
            <person name="Salzberg S.L."/>
            <person name="White O."/>
            <person name="Fleischmann R.D."/>
            <person name="Dougherty B.A."/>
            <person name="Mason T.M."/>
            <person name="Ciecko A."/>
            <person name="Parksey D.S."/>
            <person name="Blair E."/>
            <person name="Cittone H."/>
            <person name="Clark E.B."/>
            <person name="Cotton M.D."/>
            <person name="Utterback T.R."/>
            <person name="Khouri H.M."/>
            <person name="Qin H."/>
            <person name="Vamathevan J.J."/>
            <person name="Gill J."/>
            <person name="Scarlato V."/>
            <person name="Masignani V."/>
            <person name="Pizza M."/>
            <person name="Grandi G."/>
            <person name="Sun L."/>
            <person name="Smith H.O."/>
            <person name="Fraser C.M."/>
            <person name="Moxon E.R."/>
            <person name="Rappuoli R."/>
            <person name="Venter J.C."/>
        </authorList>
    </citation>
    <scope>NUCLEOTIDE SEQUENCE [LARGE SCALE GENOMIC DNA]</scope>
    <source>
        <strain>ATCC BAA-335 / MC58</strain>
    </source>
</reference>
<organism>
    <name type="scientific">Neisseria meningitidis serogroup B (strain ATCC BAA-335 / MC58)</name>
    <dbReference type="NCBI Taxonomy" id="122586"/>
    <lineage>
        <taxon>Bacteria</taxon>
        <taxon>Pseudomonadati</taxon>
        <taxon>Pseudomonadota</taxon>
        <taxon>Betaproteobacteria</taxon>
        <taxon>Neisseriales</taxon>
        <taxon>Neisseriaceae</taxon>
        <taxon>Neisseria</taxon>
    </lineage>
</organism>
<name>TRPB_NEIMB</name>
<protein>
    <recommendedName>
        <fullName evidence="1">Tryptophan synthase beta chain</fullName>
        <ecNumber evidence="1">4.2.1.20</ecNumber>
    </recommendedName>
</protein>
<feature type="chain" id="PRO_0000098973" description="Tryptophan synthase beta chain">
    <location>
        <begin position="1"/>
        <end position="400"/>
    </location>
</feature>
<feature type="modified residue" description="N6-(pyridoxal phosphate)lysine" evidence="1">
    <location>
        <position position="92"/>
    </location>
</feature>
<keyword id="KW-0028">Amino-acid biosynthesis</keyword>
<keyword id="KW-0057">Aromatic amino acid biosynthesis</keyword>
<keyword id="KW-0456">Lyase</keyword>
<keyword id="KW-0663">Pyridoxal phosphate</keyword>
<keyword id="KW-1185">Reference proteome</keyword>
<keyword id="KW-0822">Tryptophan biosynthesis</keyword>
<dbReference type="EC" id="4.2.1.20" evidence="1"/>
<dbReference type="EMBL" id="AE002098">
    <property type="protein sequence ID" value="AAF41116.1"/>
    <property type="molecule type" value="Genomic_DNA"/>
</dbReference>
<dbReference type="PIR" id="B81169">
    <property type="entry name" value="B81169"/>
</dbReference>
<dbReference type="RefSeq" id="NP_273741.1">
    <property type="nucleotide sequence ID" value="NC_003112.2"/>
</dbReference>
<dbReference type="RefSeq" id="WP_002225482.1">
    <property type="nucleotide sequence ID" value="NC_003112.2"/>
</dbReference>
<dbReference type="SMR" id="Q9K0B5"/>
<dbReference type="FunCoup" id="Q9K0B5">
    <property type="interactions" value="501"/>
</dbReference>
<dbReference type="STRING" id="122586.NMB0699"/>
<dbReference type="PaxDb" id="122586-NMB0699"/>
<dbReference type="GeneID" id="93386475"/>
<dbReference type="KEGG" id="nme:NMB0699"/>
<dbReference type="PATRIC" id="fig|122586.8.peg.887"/>
<dbReference type="HOGENOM" id="CLU_016734_3_1_4"/>
<dbReference type="InParanoid" id="Q9K0B5"/>
<dbReference type="OrthoDB" id="9766131at2"/>
<dbReference type="UniPathway" id="UPA00035">
    <property type="reaction ID" value="UER00044"/>
</dbReference>
<dbReference type="Proteomes" id="UP000000425">
    <property type="component" value="Chromosome"/>
</dbReference>
<dbReference type="GO" id="GO:0005737">
    <property type="term" value="C:cytoplasm"/>
    <property type="evidence" value="ECO:0000318"/>
    <property type="project" value="GO_Central"/>
</dbReference>
<dbReference type="GO" id="GO:0004834">
    <property type="term" value="F:tryptophan synthase activity"/>
    <property type="evidence" value="ECO:0007669"/>
    <property type="project" value="UniProtKB-UniRule"/>
</dbReference>
<dbReference type="GO" id="GO:0000162">
    <property type="term" value="P:L-tryptophan biosynthetic process"/>
    <property type="evidence" value="ECO:0000318"/>
    <property type="project" value="GO_Central"/>
</dbReference>
<dbReference type="CDD" id="cd06446">
    <property type="entry name" value="Trp-synth_B"/>
    <property type="match status" value="1"/>
</dbReference>
<dbReference type="FunFam" id="3.40.50.1100:FF:000001">
    <property type="entry name" value="Tryptophan synthase beta chain"/>
    <property type="match status" value="1"/>
</dbReference>
<dbReference type="FunFam" id="3.40.50.1100:FF:000004">
    <property type="entry name" value="Tryptophan synthase beta chain"/>
    <property type="match status" value="1"/>
</dbReference>
<dbReference type="Gene3D" id="3.40.50.1100">
    <property type="match status" value="2"/>
</dbReference>
<dbReference type="HAMAP" id="MF_00133">
    <property type="entry name" value="Trp_synth_beta"/>
    <property type="match status" value="1"/>
</dbReference>
<dbReference type="InterPro" id="IPR006653">
    <property type="entry name" value="Trp_synth_b_CS"/>
</dbReference>
<dbReference type="InterPro" id="IPR006654">
    <property type="entry name" value="Trp_synth_beta"/>
</dbReference>
<dbReference type="InterPro" id="IPR023026">
    <property type="entry name" value="Trp_synth_beta/beta-like"/>
</dbReference>
<dbReference type="InterPro" id="IPR001926">
    <property type="entry name" value="TrpB-like_PALP"/>
</dbReference>
<dbReference type="InterPro" id="IPR036052">
    <property type="entry name" value="TrpB-like_PALP_sf"/>
</dbReference>
<dbReference type="NCBIfam" id="TIGR00263">
    <property type="entry name" value="trpB"/>
    <property type="match status" value="1"/>
</dbReference>
<dbReference type="PANTHER" id="PTHR48077:SF3">
    <property type="entry name" value="TRYPTOPHAN SYNTHASE"/>
    <property type="match status" value="1"/>
</dbReference>
<dbReference type="PANTHER" id="PTHR48077">
    <property type="entry name" value="TRYPTOPHAN SYNTHASE-RELATED"/>
    <property type="match status" value="1"/>
</dbReference>
<dbReference type="Pfam" id="PF00291">
    <property type="entry name" value="PALP"/>
    <property type="match status" value="1"/>
</dbReference>
<dbReference type="PIRSF" id="PIRSF001413">
    <property type="entry name" value="Trp_syn_beta"/>
    <property type="match status" value="1"/>
</dbReference>
<dbReference type="SUPFAM" id="SSF53686">
    <property type="entry name" value="Tryptophan synthase beta subunit-like PLP-dependent enzymes"/>
    <property type="match status" value="1"/>
</dbReference>
<dbReference type="PROSITE" id="PS00168">
    <property type="entry name" value="TRP_SYNTHASE_BETA"/>
    <property type="match status" value="1"/>
</dbReference>
<sequence>MKNYHAPDEKGFFGEHGGLYVSETLIPALQELADAYKAAKNDPEFWEAFRHDLKHYVGRPSPVYHAARLSEHLGGAQIWLKREDLNHTGAHKVNNTIGQALLAKRMGKKRVIAETGAGQHGVASATVAARFGMTCDVYMGADDIQRQMPNVFRMKLLGANVVGVESGSRTLKDAMNEAMREWVARVDDTFYIIGTAAGPAPYPEMVRDFQCVIGNEAKAQMQEAIGRQPDVAVACVGGGSNAIGLFHPYIGEENVRLVGVEAGGLGVNTPDHAAPITSGAPIGVLHGFRSYLMQDENGQVLGTHSVSAGLDYPGIGPEHSHLHDIKRVEYTVAKDDEALEAFDLLCRFEGIIPALESSHAVAWAVKNAPKMGKDQVILVNLSGRGDKDINTVAKLKGIKL</sequence>
<comment type="function">
    <text evidence="1">The beta subunit is responsible for the synthesis of L-tryptophan from indole and L-serine.</text>
</comment>
<comment type="catalytic activity">
    <reaction evidence="1">
        <text>(1S,2R)-1-C-(indol-3-yl)glycerol 3-phosphate + L-serine = D-glyceraldehyde 3-phosphate + L-tryptophan + H2O</text>
        <dbReference type="Rhea" id="RHEA:10532"/>
        <dbReference type="ChEBI" id="CHEBI:15377"/>
        <dbReference type="ChEBI" id="CHEBI:33384"/>
        <dbReference type="ChEBI" id="CHEBI:57912"/>
        <dbReference type="ChEBI" id="CHEBI:58866"/>
        <dbReference type="ChEBI" id="CHEBI:59776"/>
        <dbReference type="EC" id="4.2.1.20"/>
    </reaction>
</comment>
<comment type="cofactor">
    <cofactor evidence="1">
        <name>pyridoxal 5'-phosphate</name>
        <dbReference type="ChEBI" id="CHEBI:597326"/>
    </cofactor>
</comment>
<comment type="pathway">
    <text evidence="1">Amino-acid biosynthesis; L-tryptophan biosynthesis; L-tryptophan from chorismate: step 5/5.</text>
</comment>
<comment type="subunit">
    <text evidence="1">Tetramer of two alpha and two beta chains.</text>
</comment>
<comment type="similarity">
    <text evidence="1">Belongs to the TrpB family.</text>
</comment>
<evidence type="ECO:0000255" key="1">
    <source>
        <dbReference type="HAMAP-Rule" id="MF_00133"/>
    </source>
</evidence>
<proteinExistence type="inferred from homology"/>
<gene>
    <name evidence="1" type="primary">trpB</name>
    <name type="ordered locus">NMB0699</name>
</gene>
<accession>Q9K0B5</accession>